<reference key="1">
    <citation type="submission" date="2008-05" db="EMBL/GenBank/DDBJ databases">
        <title>Complete sequence of Shigella boydii serotype 18 strain BS512.</title>
        <authorList>
            <person name="Rasko D.A."/>
            <person name="Rosovitz M."/>
            <person name="Maurelli A.T."/>
            <person name="Myers G."/>
            <person name="Seshadri R."/>
            <person name="Cer R."/>
            <person name="Jiang L."/>
            <person name="Ravel J."/>
            <person name="Sebastian Y."/>
        </authorList>
    </citation>
    <scope>NUCLEOTIDE SEQUENCE [LARGE SCALE GENOMIC DNA]</scope>
    <source>
        <strain>CDC 3083-94 / BS512</strain>
    </source>
</reference>
<sequence>MQRVTITLDDDLLETLDSLSQRRGYNNRSEAIRDILRSALAQEATQQHGTQGFAVLSYVYEHEKRDLASRIVSTQHHHHDLSVATLHVHINHDDCLEIAVLKGDMGDVQHFADDVIAQRGVRHGHLQCLPKED</sequence>
<comment type="function">
    <text evidence="1">Transcriptional repressor of the nikABCDE operon. Is active in the presence of excessive concentrations of intracellular nickel.</text>
</comment>
<comment type="cofactor">
    <cofactor evidence="1">
        <name>Ni(2+)</name>
        <dbReference type="ChEBI" id="CHEBI:49786"/>
    </cofactor>
    <text evidence="1">Binds 1 nickel ion per subunit.</text>
</comment>
<comment type="subunit">
    <text evidence="1">Homotetramer.</text>
</comment>
<comment type="similarity">
    <text evidence="1">Belongs to the transcriptional regulatory CopG/NikR family.</text>
</comment>
<organism>
    <name type="scientific">Shigella boydii serotype 18 (strain CDC 3083-94 / BS512)</name>
    <dbReference type="NCBI Taxonomy" id="344609"/>
    <lineage>
        <taxon>Bacteria</taxon>
        <taxon>Pseudomonadati</taxon>
        <taxon>Pseudomonadota</taxon>
        <taxon>Gammaproteobacteria</taxon>
        <taxon>Enterobacterales</taxon>
        <taxon>Enterobacteriaceae</taxon>
        <taxon>Shigella</taxon>
    </lineage>
</organism>
<proteinExistence type="inferred from homology"/>
<protein>
    <recommendedName>
        <fullName evidence="1">Nickel-responsive regulator</fullName>
    </recommendedName>
</protein>
<gene>
    <name evidence="1" type="primary">nikR</name>
    <name type="ordered locus">SbBS512_E3840</name>
</gene>
<name>NIKR_SHIB3</name>
<accession>B2U4B0</accession>
<feature type="chain" id="PRO_1000125842" description="Nickel-responsive regulator">
    <location>
        <begin position="1"/>
        <end position="133"/>
    </location>
</feature>
<feature type="binding site" evidence="1">
    <location>
        <position position="76"/>
    </location>
    <ligand>
        <name>Ni(2+)</name>
        <dbReference type="ChEBI" id="CHEBI:49786"/>
    </ligand>
</feature>
<feature type="binding site" evidence="1">
    <location>
        <position position="87"/>
    </location>
    <ligand>
        <name>Ni(2+)</name>
        <dbReference type="ChEBI" id="CHEBI:49786"/>
    </ligand>
</feature>
<feature type="binding site" evidence="1">
    <location>
        <position position="89"/>
    </location>
    <ligand>
        <name>Ni(2+)</name>
        <dbReference type="ChEBI" id="CHEBI:49786"/>
    </ligand>
</feature>
<feature type="binding site" evidence="1">
    <location>
        <position position="95"/>
    </location>
    <ligand>
        <name>Ni(2+)</name>
        <dbReference type="ChEBI" id="CHEBI:49786"/>
    </ligand>
</feature>
<keyword id="KW-0238">DNA-binding</keyword>
<keyword id="KW-0479">Metal-binding</keyword>
<keyword id="KW-0533">Nickel</keyword>
<keyword id="KW-1185">Reference proteome</keyword>
<keyword id="KW-0678">Repressor</keyword>
<keyword id="KW-0804">Transcription</keyword>
<keyword id="KW-0805">Transcription regulation</keyword>
<evidence type="ECO:0000255" key="1">
    <source>
        <dbReference type="HAMAP-Rule" id="MF_00476"/>
    </source>
</evidence>
<dbReference type="EMBL" id="CP001063">
    <property type="protein sequence ID" value="ACD07426.1"/>
    <property type="molecule type" value="Genomic_DNA"/>
</dbReference>
<dbReference type="RefSeq" id="WP_001190062.1">
    <property type="nucleotide sequence ID" value="NC_010658.1"/>
</dbReference>
<dbReference type="SMR" id="B2U4B0"/>
<dbReference type="STRING" id="344609.SbBS512_E3840"/>
<dbReference type="GeneID" id="93778510"/>
<dbReference type="KEGG" id="sbc:SbBS512_E3840"/>
<dbReference type="HOGENOM" id="CLU_113319_1_4_6"/>
<dbReference type="Proteomes" id="UP000001030">
    <property type="component" value="Chromosome"/>
</dbReference>
<dbReference type="GO" id="GO:0003700">
    <property type="term" value="F:DNA-binding transcription factor activity"/>
    <property type="evidence" value="ECO:0007669"/>
    <property type="project" value="UniProtKB-UniRule"/>
</dbReference>
<dbReference type="GO" id="GO:0016151">
    <property type="term" value="F:nickel cation binding"/>
    <property type="evidence" value="ECO:0007669"/>
    <property type="project" value="UniProtKB-UniRule"/>
</dbReference>
<dbReference type="GO" id="GO:0043565">
    <property type="term" value="F:sequence-specific DNA binding"/>
    <property type="evidence" value="ECO:0007669"/>
    <property type="project" value="UniProtKB-ARBA"/>
</dbReference>
<dbReference type="GO" id="GO:0010045">
    <property type="term" value="P:response to nickel cation"/>
    <property type="evidence" value="ECO:0007669"/>
    <property type="project" value="InterPro"/>
</dbReference>
<dbReference type="CDD" id="cd22231">
    <property type="entry name" value="RHH_NikR_HicB-like"/>
    <property type="match status" value="1"/>
</dbReference>
<dbReference type="FunFam" id="1.10.1220.10:FF:000001">
    <property type="entry name" value="Nickel-responsive regulator"/>
    <property type="match status" value="1"/>
</dbReference>
<dbReference type="FunFam" id="3.30.70.1150:FF:000002">
    <property type="entry name" value="Nickel-responsive regulator"/>
    <property type="match status" value="1"/>
</dbReference>
<dbReference type="Gene3D" id="3.30.70.1150">
    <property type="entry name" value="ACT-like. Chain A, domain 2"/>
    <property type="match status" value="1"/>
</dbReference>
<dbReference type="Gene3D" id="1.10.1220.10">
    <property type="entry name" value="Met repressor-like"/>
    <property type="match status" value="1"/>
</dbReference>
<dbReference type="HAMAP" id="MF_00476">
    <property type="entry name" value="NikR"/>
    <property type="match status" value="1"/>
</dbReference>
<dbReference type="InterPro" id="IPR027271">
    <property type="entry name" value="Acetolactate_synth/TF_NikR_C"/>
</dbReference>
<dbReference type="InterPro" id="IPR045865">
    <property type="entry name" value="ACT-like_dom_sf"/>
</dbReference>
<dbReference type="InterPro" id="IPR013321">
    <property type="entry name" value="Arc_rbn_hlx_hlx"/>
</dbReference>
<dbReference type="InterPro" id="IPR002145">
    <property type="entry name" value="CopG"/>
</dbReference>
<dbReference type="InterPro" id="IPR050192">
    <property type="entry name" value="CopG/NikR_regulator"/>
</dbReference>
<dbReference type="InterPro" id="IPR022988">
    <property type="entry name" value="Ni_resp_reg_NikR"/>
</dbReference>
<dbReference type="InterPro" id="IPR014160">
    <property type="entry name" value="Nickel_NikR_proteobac"/>
</dbReference>
<dbReference type="InterPro" id="IPR010985">
    <property type="entry name" value="Ribbon_hlx_hlx"/>
</dbReference>
<dbReference type="InterPro" id="IPR014864">
    <property type="entry name" value="TF_NikR_Ni-bd_C"/>
</dbReference>
<dbReference type="NCBIfam" id="TIGR02793">
    <property type="entry name" value="nikR"/>
    <property type="match status" value="1"/>
</dbReference>
<dbReference type="NCBIfam" id="NF002815">
    <property type="entry name" value="PRK02967.1"/>
    <property type="match status" value="1"/>
</dbReference>
<dbReference type="NCBIfam" id="NF003381">
    <property type="entry name" value="PRK04460.1"/>
    <property type="match status" value="1"/>
</dbReference>
<dbReference type="PANTHER" id="PTHR34719">
    <property type="entry name" value="NICKEL-RESPONSIVE REGULATOR"/>
    <property type="match status" value="1"/>
</dbReference>
<dbReference type="PANTHER" id="PTHR34719:SF2">
    <property type="entry name" value="NICKEL-RESPONSIVE REGULATOR"/>
    <property type="match status" value="1"/>
</dbReference>
<dbReference type="Pfam" id="PF08753">
    <property type="entry name" value="NikR_C"/>
    <property type="match status" value="1"/>
</dbReference>
<dbReference type="Pfam" id="PF01402">
    <property type="entry name" value="RHH_1"/>
    <property type="match status" value="1"/>
</dbReference>
<dbReference type="SUPFAM" id="SSF55021">
    <property type="entry name" value="ACT-like"/>
    <property type="match status" value="1"/>
</dbReference>
<dbReference type="SUPFAM" id="SSF47598">
    <property type="entry name" value="Ribbon-helix-helix"/>
    <property type="match status" value="1"/>
</dbReference>